<accession>A5IS69</accession>
<comment type="function">
    <text evidence="1">Cell wall formation. Catalyzes the addition of glutamate to the nucleotide precursor UDP-N-acetylmuramoyl-L-alanine (UMA).</text>
</comment>
<comment type="catalytic activity">
    <reaction evidence="1">
        <text>UDP-N-acetyl-alpha-D-muramoyl-L-alanine + D-glutamate + ATP = UDP-N-acetyl-alpha-D-muramoyl-L-alanyl-D-glutamate + ADP + phosphate + H(+)</text>
        <dbReference type="Rhea" id="RHEA:16429"/>
        <dbReference type="ChEBI" id="CHEBI:15378"/>
        <dbReference type="ChEBI" id="CHEBI:29986"/>
        <dbReference type="ChEBI" id="CHEBI:30616"/>
        <dbReference type="ChEBI" id="CHEBI:43474"/>
        <dbReference type="ChEBI" id="CHEBI:83898"/>
        <dbReference type="ChEBI" id="CHEBI:83900"/>
        <dbReference type="ChEBI" id="CHEBI:456216"/>
        <dbReference type="EC" id="6.3.2.9"/>
    </reaction>
</comment>
<comment type="pathway">
    <text evidence="1">Cell wall biogenesis; peptidoglycan biosynthesis.</text>
</comment>
<comment type="subcellular location">
    <subcellularLocation>
        <location evidence="1">Cytoplasm</location>
    </subcellularLocation>
</comment>
<comment type="similarity">
    <text evidence="1">Belongs to the MurCDEF family.</text>
</comment>
<name>MURD_STAA9</name>
<proteinExistence type="inferred from homology"/>
<protein>
    <recommendedName>
        <fullName evidence="1">UDP-N-acetylmuramoylalanine--D-glutamate ligase</fullName>
        <ecNumber evidence="1">6.3.2.9</ecNumber>
    </recommendedName>
    <alternativeName>
        <fullName evidence="1">D-glutamic acid-adding enzyme</fullName>
    </alternativeName>
    <alternativeName>
        <fullName evidence="1">UDP-N-acetylmuramoyl-L-alanyl-D-glutamate synthetase</fullName>
    </alternativeName>
</protein>
<keyword id="KW-0067">ATP-binding</keyword>
<keyword id="KW-0131">Cell cycle</keyword>
<keyword id="KW-0132">Cell division</keyword>
<keyword id="KW-0133">Cell shape</keyword>
<keyword id="KW-0961">Cell wall biogenesis/degradation</keyword>
<keyword id="KW-0963">Cytoplasm</keyword>
<keyword id="KW-0436">Ligase</keyword>
<keyword id="KW-0547">Nucleotide-binding</keyword>
<keyword id="KW-0573">Peptidoglycan synthesis</keyword>
<sequence length="449" mass="49844">MLNYTGLENKNVLVVGLAKSGYEAAKLLSKLGANVTVNDGKDLSQDAHAKDLESMGISVVSGSHPLTLLDNNPIIVKNPGIPYTVSIIDEAVKRGLKILTEVELSYLISEAPIIAVTGTNGKTTVTSLIGDMFKKSRLTGRLSGNIGYVASKVAQEVKPTDYLVTELSSFQLLGIEKYKPHIAIITNIYSAHLDYHENLENYQNAKKQIYKNQTEEDYLICNYHQRQVIESEELKAKTLYFSTQQEVDGIYIKDGFIVYKGVRIINTEDLVLPGEHNLENILAAVLACILAGVPIKAIIDSLTTFSGIEHRLQYVGTNRTNKYYNDSKATNTLATQFALNSFNQPIIWLCGGLDRGNEFDELIPYMENVRAMVVFGQTKAKFAKLGNSQGKSVIEANNVEDAVDKVQDIIEPNDVVLLSPACASWDQYSTFEERGEKFIERFRAHLPSY</sequence>
<dbReference type="EC" id="6.3.2.9" evidence="1"/>
<dbReference type="EMBL" id="CP000703">
    <property type="protein sequence ID" value="ABQ49042.1"/>
    <property type="molecule type" value="Genomic_DNA"/>
</dbReference>
<dbReference type="RefSeq" id="WP_000935991.1">
    <property type="nucleotide sequence ID" value="NC_009487.1"/>
</dbReference>
<dbReference type="SMR" id="A5IS69"/>
<dbReference type="KEGG" id="saj:SaurJH9_1242"/>
<dbReference type="HOGENOM" id="CLU_032540_0_1_9"/>
<dbReference type="UniPathway" id="UPA00219"/>
<dbReference type="GO" id="GO:0005737">
    <property type="term" value="C:cytoplasm"/>
    <property type="evidence" value="ECO:0007669"/>
    <property type="project" value="UniProtKB-SubCell"/>
</dbReference>
<dbReference type="GO" id="GO:0005524">
    <property type="term" value="F:ATP binding"/>
    <property type="evidence" value="ECO:0007669"/>
    <property type="project" value="UniProtKB-UniRule"/>
</dbReference>
<dbReference type="GO" id="GO:0008764">
    <property type="term" value="F:UDP-N-acetylmuramoylalanine-D-glutamate ligase activity"/>
    <property type="evidence" value="ECO:0007669"/>
    <property type="project" value="UniProtKB-UniRule"/>
</dbReference>
<dbReference type="GO" id="GO:0051301">
    <property type="term" value="P:cell division"/>
    <property type="evidence" value="ECO:0007669"/>
    <property type="project" value="UniProtKB-KW"/>
</dbReference>
<dbReference type="GO" id="GO:0071555">
    <property type="term" value="P:cell wall organization"/>
    <property type="evidence" value="ECO:0007669"/>
    <property type="project" value="UniProtKB-KW"/>
</dbReference>
<dbReference type="GO" id="GO:0009252">
    <property type="term" value="P:peptidoglycan biosynthetic process"/>
    <property type="evidence" value="ECO:0007669"/>
    <property type="project" value="UniProtKB-UniRule"/>
</dbReference>
<dbReference type="GO" id="GO:0008360">
    <property type="term" value="P:regulation of cell shape"/>
    <property type="evidence" value="ECO:0007669"/>
    <property type="project" value="UniProtKB-KW"/>
</dbReference>
<dbReference type="Gene3D" id="3.90.190.20">
    <property type="entry name" value="Mur ligase, C-terminal domain"/>
    <property type="match status" value="1"/>
</dbReference>
<dbReference type="Gene3D" id="3.40.1190.10">
    <property type="entry name" value="Mur-like, catalytic domain"/>
    <property type="match status" value="1"/>
</dbReference>
<dbReference type="Gene3D" id="3.40.50.720">
    <property type="entry name" value="NAD(P)-binding Rossmann-like Domain"/>
    <property type="match status" value="1"/>
</dbReference>
<dbReference type="HAMAP" id="MF_00639">
    <property type="entry name" value="MurD"/>
    <property type="match status" value="1"/>
</dbReference>
<dbReference type="InterPro" id="IPR036565">
    <property type="entry name" value="Mur-like_cat_sf"/>
</dbReference>
<dbReference type="InterPro" id="IPR004101">
    <property type="entry name" value="Mur_ligase_C"/>
</dbReference>
<dbReference type="InterPro" id="IPR036615">
    <property type="entry name" value="Mur_ligase_C_dom_sf"/>
</dbReference>
<dbReference type="InterPro" id="IPR013221">
    <property type="entry name" value="Mur_ligase_cen"/>
</dbReference>
<dbReference type="InterPro" id="IPR005762">
    <property type="entry name" value="MurD"/>
</dbReference>
<dbReference type="NCBIfam" id="TIGR01087">
    <property type="entry name" value="murD"/>
    <property type="match status" value="1"/>
</dbReference>
<dbReference type="PANTHER" id="PTHR43692">
    <property type="entry name" value="UDP-N-ACETYLMURAMOYLALANINE--D-GLUTAMATE LIGASE"/>
    <property type="match status" value="1"/>
</dbReference>
<dbReference type="PANTHER" id="PTHR43692:SF1">
    <property type="entry name" value="UDP-N-ACETYLMURAMOYLALANINE--D-GLUTAMATE LIGASE"/>
    <property type="match status" value="1"/>
</dbReference>
<dbReference type="Pfam" id="PF02875">
    <property type="entry name" value="Mur_ligase_C"/>
    <property type="match status" value="1"/>
</dbReference>
<dbReference type="Pfam" id="PF08245">
    <property type="entry name" value="Mur_ligase_M"/>
    <property type="match status" value="1"/>
</dbReference>
<dbReference type="Pfam" id="PF21799">
    <property type="entry name" value="MurD-like_N"/>
    <property type="match status" value="1"/>
</dbReference>
<dbReference type="SUPFAM" id="SSF51984">
    <property type="entry name" value="MurCD N-terminal domain"/>
    <property type="match status" value="1"/>
</dbReference>
<dbReference type="SUPFAM" id="SSF53623">
    <property type="entry name" value="MurD-like peptide ligases, catalytic domain"/>
    <property type="match status" value="1"/>
</dbReference>
<dbReference type="SUPFAM" id="SSF53244">
    <property type="entry name" value="MurD-like peptide ligases, peptide-binding domain"/>
    <property type="match status" value="1"/>
</dbReference>
<gene>
    <name evidence="1" type="primary">murD</name>
    <name type="ordered locus">SaurJH9_1242</name>
</gene>
<feature type="chain" id="PRO_1000082693" description="UDP-N-acetylmuramoylalanine--D-glutamate ligase">
    <location>
        <begin position="1"/>
        <end position="449"/>
    </location>
</feature>
<feature type="binding site" evidence="1">
    <location>
        <begin position="118"/>
        <end position="124"/>
    </location>
    <ligand>
        <name>ATP</name>
        <dbReference type="ChEBI" id="CHEBI:30616"/>
    </ligand>
</feature>
<reference key="1">
    <citation type="submission" date="2007-05" db="EMBL/GenBank/DDBJ databases">
        <title>Complete sequence of chromosome of Staphylococcus aureus subsp. aureus JH9.</title>
        <authorList>
            <consortium name="US DOE Joint Genome Institute"/>
            <person name="Copeland A."/>
            <person name="Lucas S."/>
            <person name="Lapidus A."/>
            <person name="Barry K."/>
            <person name="Detter J.C."/>
            <person name="Glavina del Rio T."/>
            <person name="Hammon N."/>
            <person name="Israni S."/>
            <person name="Pitluck S."/>
            <person name="Chain P."/>
            <person name="Malfatti S."/>
            <person name="Shin M."/>
            <person name="Vergez L."/>
            <person name="Schmutz J."/>
            <person name="Larimer F."/>
            <person name="Land M."/>
            <person name="Hauser L."/>
            <person name="Kyrpides N."/>
            <person name="Kim E."/>
            <person name="Tomasz A."/>
            <person name="Richardson P."/>
        </authorList>
    </citation>
    <scope>NUCLEOTIDE SEQUENCE [LARGE SCALE GENOMIC DNA]</scope>
    <source>
        <strain>JH9</strain>
    </source>
</reference>
<evidence type="ECO:0000255" key="1">
    <source>
        <dbReference type="HAMAP-Rule" id="MF_00639"/>
    </source>
</evidence>
<organism>
    <name type="scientific">Staphylococcus aureus (strain JH9)</name>
    <dbReference type="NCBI Taxonomy" id="359786"/>
    <lineage>
        <taxon>Bacteria</taxon>
        <taxon>Bacillati</taxon>
        <taxon>Bacillota</taxon>
        <taxon>Bacilli</taxon>
        <taxon>Bacillales</taxon>
        <taxon>Staphylococcaceae</taxon>
        <taxon>Staphylococcus</taxon>
    </lineage>
</organism>